<keyword id="KW-0012">Acyltransferase</keyword>
<keyword id="KW-0284">Flavonoid biosynthesis</keyword>
<keyword id="KW-0808">Transferase</keyword>
<protein>
    <recommendedName>
        <fullName>Chalcone synthase E</fullName>
        <ecNumber>2.3.1.74</ecNumber>
    </recommendedName>
    <alternativeName>
        <fullName>Naringenin-chalcone synthase E</fullName>
        <shortName>CHS-E</shortName>
    </alternativeName>
</protein>
<accession>O22047</accession>
<sequence length="389" mass="42677">MVTVEEVRKAQRAQGPATIMAIGTSTPQNCVDQSTYPDYYFRITNSEHLVELKEKFKRMCEKSMIKKRYMYLTEEILTENPNICAYMAPSLDARQDIVVVEVPKLGKEAAQKAIKEWGQPKSKITHLVFCTTSGVDMPGADYQLTKLLGLQPSVKRFMMYQQGCFAGGTVIRLAKDLAENNKGARVLVVCSEITAVTFRGPSDAHLDSLVGQALFGDGAAALIIGSDPDPDLERPLFQLVSAAQTILPDSGGAIDGHLREVGLTFHLLKDVPGLISKHIEKSLNEAFQPLGIRDWNSLFWIAHPGGPAILDQVEEKLELKPEKLRATRHVLSEYGNMSSACVLFILDEMRKASSKEGLNTTGEGLEWGVLFGFGPGLTVETVVLHSVSA</sequence>
<organism>
    <name type="scientific">Ipomoea purpurea</name>
    <name type="common">Common morning glory</name>
    <name type="synonym">Pharbitis purpurea</name>
    <dbReference type="NCBI Taxonomy" id="4121"/>
    <lineage>
        <taxon>Eukaryota</taxon>
        <taxon>Viridiplantae</taxon>
        <taxon>Streptophyta</taxon>
        <taxon>Embryophyta</taxon>
        <taxon>Tracheophyta</taxon>
        <taxon>Spermatophyta</taxon>
        <taxon>Magnoliopsida</taxon>
        <taxon>eudicotyledons</taxon>
        <taxon>Gunneridae</taxon>
        <taxon>Pentapetalae</taxon>
        <taxon>asterids</taxon>
        <taxon>lamiids</taxon>
        <taxon>Solanales</taxon>
        <taxon>Convolvulaceae</taxon>
        <taxon>Ipomoeeae</taxon>
        <taxon>Ipomoea</taxon>
    </lineage>
</organism>
<comment type="function">
    <text>The primary product of this enzyme is 4,2',4',6'-tetrahydroxychalcone (also termed naringenin-chalcone or chalcone) which can under specific conditions spontaneously isomerize into naringenin.</text>
</comment>
<comment type="catalytic activity">
    <reaction evidence="1">
        <text>(E)-4-coumaroyl-CoA + 3 malonyl-CoA + 3 H(+) = 2',4,4',6'-tetrahydroxychalcone + 3 CO2 + 4 CoA</text>
        <dbReference type="Rhea" id="RHEA:11128"/>
        <dbReference type="ChEBI" id="CHEBI:15378"/>
        <dbReference type="ChEBI" id="CHEBI:15413"/>
        <dbReference type="ChEBI" id="CHEBI:16526"/>
        <dbReference type="ChEBI" id="CHEBI:57287"/>
        <dbReference type="ChEBI" id="CHEBI:57384"/>
        <dbReference type="ChEBI" id="CHEBI:85008"/>
        <dbReference type="EC" id="2.3.1.74"/>
    </reaction>
</comment>
<comment type="pathway">
    <text>Secondary metabolite biosynthesis; flavonoid biosynthesis.</text>
</comment>
<comment type="similarity">
    <text evidence="2">Belongs to the thiolase-like superfamily. Chalcone/stilbene synthases family.</text>
</comment>
<feature type="chain" id="PRO_0000215995" description="Chalcone synthase E">
    <location>
        <begin position="1"/>
        <end position="389"/>
    </location>
</feature>
<feature type="active site" evidence="1">
    <location>
        <position position="164"/>
    </location>
</feature>
<dbReference type="EC" id="2.3.1.74"/>
<dbReference type="EMBL" id="AB001827">
    <property type="protein sequence ID" value="BAA21789.1"/>
    <property type="molecule type" value="mRNA"/>
</dbReference>
<dbReference type="PIR" id="T07799">
    <property type="entry name" value="T07799"/>
</dbReference>
<dbReference type="SMR" id="O22047"/>
<dbReference type="UniPathway" id="UPA00154"/>
<dbReference type="GO" id="GO:0016210">
    <property type="term" value="F:naringenin-chalcone synthase activity"/>
    <property type="evidence" value="ECO:0007669"/>
    <property type="project" value="UniProtKB-EC"/>
</dbReference>
<dbReference type="GO" id="GO:0009813">
    <property type="term" value="P:flavonoid biosynthetic process"/>
    <property type="evidence" value="ECO:0007669"/>
    <property type="project" value="UniProtKB-UniPathway"/>
</dbReference>
<dbReference type="GO" id="GO:0030639">
    <property type="term" value="P:polyketide biosynthetic process"/>
    <property type="evidence" value="ECO:0007669"/>
    <property type="project" value="TreeGrafter"/>
</dbReference>
<dbReference type="CDD" id="cd00831">
    <property type="entry name" value="CHS_like"/>
    <property type="match status" value="1"/>
</dbReference>
<dbReference type="FunFam" id="3.40.47.10:FF:000014">
    <property type="entry name" value="Chalcone synthase 1"/>
    <property type="match status" value="1"/>
</dbReference>
<dbReference type="FunFam" id="3.40.47.10:FF:000025">
    <property type="entry name" value="Chalcone synthase 2"/>
    <property type="match status" value="1"/>
</dbReference>
<dbReference type="Gene3D" id="3.40.47.10">
    <property type="match status" value="2"/>
</dbReference>
<dbReference type="InterPro" id="IPR012328">
    <property type="entry name" value="Chalcone/stilbene_synt_C"/>
</dbReference>
<dbReference type="InterPro" id="IPR001099">
    <property type="entry name" value="Chalcone/stilbene_synt_N"/>
</dbReference>
<dbReference type="InterPro" id="IPR018088">
    <property type="entry name" value="Chalcone/stilbene_synthase_AS"/>
</dbReference>
<dbReference type="InterPro" id="IPR011141">
    <property type="entry name" value="Polyketide_synthase_type-III"/>
</dbReference>
<dbReference type="InterPro" id="IPR016039">
    <property type="entry name" value="Thiolase-like"/>
</dbReference>
<dbReference type="PANTHER" id="PTHR11877:SF80">
    <property type="entry name" value="CHALCONE SYNTHASE 1"/>
    <property type="match status" value="1"/>
</dbReference>
<dbReference type="PANTHER" id="PTHR11877">
    <property type="entry name" value="HYDROXYMETHYLGLUTARYL-COA SYNTHASE"/>
    <property type="match status" value="1"/>
</dbReference>
<dbReference type="Pfam" id="PF02797">
    <property type="entry name" value="Chal_sti_synt_C"/>
    <property type="match status" value="1"/>
</dbReference>
<dbReference type="Pfam" id="PF00195">
    <property type="entry name" value="Chal_sti_synt_N"/>
    <property type="match status" value="1"/>
</dbReference>
<dbReference type="PIRSF" id="PIRSF000451">
    <property type="entry name" value="PKS_III"/>
    <property type="match status" value="1"/>
</dbReference>
<dbReference type="SUPFAM" id="SSF53901">
    <property type="entry name" value="Thiolase-like"/>
    <property type="match status" value="2"/>
</dbReference>
<dbReference type="PROSITE" id="PS00441">
    <property type="entry name" value="CHALCONE_SYNTH"/>
    <property type="match status" value="1"/>
</dbReference>
<reference key="1">
    <citation type="journal article" date="1997" name="Plant Cell Physiol.">
        <title>Identification of new chalcone synthase genes for flower pigmentation in the Japanese and common morning glories.</title>
        <authorList>
            <person name="Fukada-Tanaka S."/>
            <person name="Hoshino A."/>
            <person name="Hisatomi Y."/>
            <person name="Habu Y."/>
            <person name="Hasebe M."/>
            <person name="Iida S."/>
        </authorList>
    </citation>
    <scope>NUCLEOTIDE SEQUENCE [MRNA]</scope>
    <source>
        <strain>cv. FR-35</strain>
        <tissue>Flower bud</tissue>
    </source>
</reference>
<proteinExistence type="evidence at transcript level"/>
<name>CHSE_IPOPU</name>
<evidence type="ECO:0000255" key="1">
    <source>
        <dbReference type="PROSITE-ProRule" id="PRU10023"/>
    </source>
</evidence>
<evidence type="ECO:0000305" key="2"/>
<gene>
    <name type="primary">CHSE</name>
</gene>